<comment type="function">
    <text evidence="1 2 3">Component of the proteasome core, a large protease complex with broad specificity involved in protein degradation. The H.volcanii alpha1-beta-alpha2 proteasome is able to cleave oligopeptides after Tyr and thus displays chymotrypsin-like activity.</text>
</comment>
<comment type="activity regulation">
    <text evidence="1">The formation of the proteasomal ATPase PAN-20S proteasome complex, via the docking of the C-termini of PAN into the intersubunit pockets in the alpha-rings, triggers opening of the gate for substrate entry. Interconversion between the open-gate and close-gate conformations leads to a dynamic regulation of the 20S proteasome proteolysis activity.</text>
</comment>
<comment type="subunit">
    <text evidence="2 3">The 20S proteasome core is composed of 14 alpha and 14 beta subunits that assemble into four stacked heptameric rings, resulting in a barrel-shaped structure. The two inner rings, each composed of seven catalytic beta subunits, are sandwiched by two outer rings, each composed of seven alpha subunits. H.volcanii produces at least 2 types of 20S proteasomes: an alpha1-beta proteasome and a proteasome containing all three subunits (alpha1, alpha2, and beta) that appears to be asymmetrical with homo-oligomeric alpha1 and alpha2 rings positioned on separate ends. The catalytic chamber with the active sites is on the inside of the barrel. Has probably a gated structure, the ends of the cylinder being occluded by the N-termini of the alpha-subunits. Is likely capped at one or both ends by the proteasome regulatory ATPase, PAN.</text>
</comment>
<comment type="subcellular location">
    <subcellularLocation>
        <location evidence="1">Cytoplasm</location>
    </subcellularLocation>
</comment>
<comment type="induction">
    <text evidence="4">Up-regulated at mRNA and protein levels during transition from exponential to stationary phase.</text>
</comment>
<comment type="disruption phenotype">
    <text evidence="6">Strains lacking psmA2 gene alone display relatively normal growth rate and overall cell yield. However, depletion of psmA1 and psmA2 together renders the cells inviable.</text>
</comment>
<comment type="similarity">
    <text evidence="1">Belongs to the peptidase T1A family.</text>
</comment>
<feature type="chain" id="PRO_0000124172" description="Proteasome subunit alpha 2">
    <location>
        <begin position="1"/>
        <end position="249"/>
    </location>
</feature>
<feature type="modified residue" description="N-acetylmethionine" evidence="5">
    <location>
        <position position="1"/>
    </location>
</feature>
<name>PSA2_HALVD</name>
<protein>
    <recommendedName>
        <fullName evidence="1">Proteasome subunit alpha 2</fullName>
    </recommendedName>
    <alternativeName>
        <fullName evidence="1">20S proteasome alpha subunit 2</fullName>
    </alternativeName>
    <alternativeName>
        <fullName evidence="1">Proteasome core protein PsmA 2</fullName>
    </alternativeName>
</protein>
<keyword id="KW-0007">Acetylation</keyword>
<keyword id="KW-0963">Cytoplasm</keyword>
<keyword id="KW-0903">Direct protein sequencing</keyword>
<keyword id="KW-0647">Proteasome</keyword>
<keyword id="KW-1185">Reference proteome</keyword>
<gene>
    <name evidence="1" type="primary">psmA2</name>
    <name type="synonym">psmC</name>
    <name type="ordered locus">HVO_2923</name>
</gene>
<sequence>MNRNDKQAYDRGTSLFSPDGRIYQVEYAREAVKRGAPVLGVRTADGVVLAALRSTPSELMEAESIEKLHKLDDALGAATAGHVADARKLVDFARTTAQREHLRYGEPIGVETLTKTITDNIQESTQSGGTRPYGASLLIGGVENGSGRLFATDPSGTPQEWKAVAIGGHREDVQAALEDGYAEDLSLEDGLALAVEALVAADEEIESDELNLVTVSEAGYEIVDEETIAELFADATADDESDETDEREE</sequence>
<evidence type="ECO:0000255" key="1">
    <source>
        <dbReference type="HAMAP-Rule" id="MF_00289"/>
    </source>
</evidence>
<evidence type="ECO:0000269" key="2">
    <source>
    </source>
</evidence>
<evidence type="ECO:0000269" key="3">
    <source>
    </source>
</evidence>
<evidence type="ECO:0000269" key="4">
    <source>
    </source>
</evidence>
<evidence type="ECO:0000269" key="5">
    <source>
    </source>
</evidence>
<evidence type="ECO:0000269" key="6">
    <source>
    </source>
</evidence>
<dbReference type="EMBL" id="AF126261">
    <property type="protein sequence ID" value="AAD53405.1"/>
    <property type="molecule type" value="Genomic_DNA"/>
</dbReference>
<dbReference type="EMBL" id="CP001956">
    <property type="protein sequence ID" value="ADE02793.1"/>
    <property type="molecule type" value="Genomic_DNA"/>
</dbReference>
<dbReference type="PIR" id="T48679">
    <property type="entry name" value="T48679"/>
</dbReference>
<dbReference type="RefSeq" id="WP_004044756.1">
    <property type="nucleotide sequence ID" value="NC_013967.1"/>
</dbReference>
<dbReference type="SMR" id="Q9V2V5"/>
<dbReference type="IntAct" id="Q9V2V5">
    <property type="interactions" value="1"/>
</dbReference>
<dbReference type="STRING" id="309800.HVO_2923"/>
<dbReference type="iPTMnet" id="Q9V2V5"/>
<dbReference type="PaxDb" id="309800-C498_17805"/>
<dbReference type="EnsemblBacteria" id="ADE02793">
    <property type="protein sequence ID" value="ADE02793"/>
    <property type="gene ID" value="HVO_2923"/>
</dbReference>
<dbReference type="GeneID" id="8926453"/>
<dbReference type="KEGG" id="hvo:HVO_2923"/>
<dbReference type="eggNOG" id="arCOG00971">
    <property type="taxonomic scope" value="Archaea"/>
</dbReference>
<dbReference type="HOGENOM" id="CLU_035750_4_1_2"/>
<dbReference type="OrthoDB" id="9421at2157"/>
<dbReference type="Proteomes" id="UP000008243">
    <property type="component" value="Chromosome"/>
</dbReference>
<dbReference type="GO" id="GO:0005737">
    <property type="term" value="C:cytoplasm"/>
    <property type="evidence" value="ECO:0007669"/>
    <property type="project" value="UniProtKB-SubCell"/>
</dbReference>
<dbReference type="GO" id="GO:0019773">
    <property type="term" value="C:proteasome core complex, alpha-subunit complex"/>
    <property type="evidence" value="ECO:0000314"/>
    <property type="project" value="UniProtKB"/>
</dbReference>
<dbReference type="GO" id="GO:0004175">
    <property type="term" value="F:endopeptidase activity"/>
    <property type="evidence" value="ECO:0000314"/>
    <property type="project" value="UniProtKB"/>
</dbReference>
<dbReference type="GO" id="GO:0004298">
    <property type="term" value="F:threonine-type endopeptidase activity"/>
    <property type="evidence" value="ECO:0007669"/>
    <property type="project" value="InterPro"/>
</dbReference>
<dbReference type="GO" id="GO:0010498">
    <property type="term" value="P:proteasomal protein catabolic process"/>
    <property type="evidence" value="ECO:0000314"/>
    <property type="project" value="UniProtKB"/>
</dbReference>
<dbReference type="GO" id="GO:0006511">
    <property type="term" value="P:ubiquitin-dependent protein catabolic process"/>
    <property type="evidence" value="ECO:0007669"/>
    <property type="project" value="InterPro"/>
</dbReference>
<dbReference type="FunFam" id="3.60.20.10:FF:000004">
    <property type="entry name" value="Proteasome subunit alpha type-4"/>
    <property type="match status" value="1"/>
</dbReference>
<dbReference type="Gene3D" id="3.60.20.10">
    <property type="entry name" value="Glutamine Phosphoribosylpyrophosphate, subunit 1, domain 1"/>
    <property type="match status" value="1"/>
</dbReference>
<dbReference type="HAMAP" id="MF_00289_A">
    <property type="entry name" value="Proteasome_A_A"/>
    <property type="match status" value="1"/>
</dbReference>
<dbReference type="InterPro" id="IPR029055">
    <property type="entry name" value="Ntn_hydrolases_N"/>
</dbReference>
<dbReference type="InterPro" id="IPR050115">
    <property type="entry name" value="Proteasome_alpha"/>
</dbReference>
<dbReference type="InterPro" id="IPR023332">
    <property type="entry name" value="Proteasome_alpha-type"/>
</dbReference>
<dbReference type="InterPro" id="IPR019982">
    <property type="entry name" value="Proteasome_asu_arc"/>
</dbReference>
<dbReference type="InterPro" id="IPR000426">
    <property type="entry name" value="Proteasome_asu_N"/>
</dbReference>
<dbReference type="InterPro" id="IPR001353">
    <property type="entry name" value="Proteasome_sua/b"/>
</dbReference>
<dbReference type="NCBIfam" id="NF003075">
    <property type="entry name" value="PRK03996.1"/>
    <property type="match status" value="1"/>
</dbReference>
<dbReference type="PANTHER" id="PTHR11599">
    <property type="entry name" value="PROTEASOME SUBUNIT ALPHA/BETA"/>
    <property type="match status" value="1"/>
</dbReference>
<dbReference type="Pfam" id="PF00227">
    <property type="entry name" value="Proteasome"/>
    <property type="match status" value="1"/>
</dbReference>
<dbReference type="Pfam" id="PF10584">
    <property type="entry name" value="Proteasome_A_N"/>
    <property type="match status" value="1"/>
</dbReference>
<dbReference type="SMART" id="SM00948">
    <property type="entry name" value="Proteasome_A_N"/>
    <property type="match status" value="1"/>
</dbReference>
<dbReference type="SUPFAM" id="SSF56235">
    <property type="entry name" value="N-terminal nucleophile aminohydrolases (Ntn hydrolases)"/>
    <property type="match status" value="1"/>
</dbReference>
<dbReference type="PROSITE" id="PS00388">
    <property type="entry name" value="PROTEASOME_ALPHA_1"/>
    <property type="match status" value="1"/>
</dbReference>
<dbReference type="PROSITE" id="PS51475">
    <property type="entry name" value="PROTEASOME_ALPHA_2"/>
    <property type="match status" value="1"/>
</dbReference>
<accession>Q9V2V5</accession>
<accession>D4GXU2</accession>
<reference key="1">
    <citation type="journal article" date="1999" name="J. Bacteriol.">
        <title>Halophilic 20S proteasomes of the archaeon Haloferax volcanii: purification, characterization, and gene sequence analysis.</title>
        <authorList>
            <person name="Wilson H.L."/>
            <person name="Aldrich H.C."/>
            <person name="Maupin-Furlow J."/>
        </authorList>
    </citation>
    <scope>NUCLEOTIDE SEQUENCE [GENOMIC DNA]</scope>
    <scope>PROTEIN SEQUENCE OF 22-31; 34-43 AND 89-98</scope>
    <scope>BLOCKAGE OF N-TERMINUS</scope>
    <scope>FUNCTION</scope>
    <scope>CATALYTIC ACTIVITY</scope>
    <scope>SUBUNIT</scope>
</reference>
<reference key="2">
    <citation type="journal article" date="2010" name="PLoS ONE">
        <title>The complete genome sequence of Haloferax volcanii DS2, a model archaeon.</title>
        <authorList>
            <person name="Hartman A.L."/>
            <person name="Norais C."/>
            <person name="Badger J.H."/>
            <person name="Delmas S."/>
            <person name="Haldenby S."/>
            <person name="Madupu R."/>
            <person name="Robinson J."/>
            <person name="Khouri H."/>
            <person name="Ren Q."/>
            <person name="Lowe T.M."/>
            <person name="Maupin-Furlow J."/>
            <person name="Pohlschroder M."/>
            <person name="Daniels C."/>
            <person name="Pfeiffer F."/>
            <person name="Allers T."/>
            <person name="Eisen J.A."/>
        </authorList>
    </citation>
    <scope>NUCLEOTIDE SEQUENCE [LARGE SCALE GENOMIC DNA]</scope>
    <source>
        <strain>ATCC 29605 / DSM 3757 / JCM 8879 / NBRC 14742 / NCIMB 2012 / VKM B-1768 / DS2</strain>
    </source>
</reference>
<reference key="3">
    <citation type="journal article" date="2003" name="J. Bacteriol.">
        <title>Subunit topology of two 20S proteasomes from Haloferax volcanii.</title>
        <authorList>
            <person name="Kaczowka S.J."/>
            <person name="Maupin-Furlow J.A."/>
        </authorList>
    </citation>
    <scope>SUBUNIT</scope>
    <scope>FUNCTION</scope>
    <scope>CATALYTIC ACTIVITY</scope>
</reference>
<reference key="4">
    <citation type="journal article" date="2004" name="J. Bacteriol.">
        <title>Differential regulation of the PanA and PanB proteasome-activating nucleotidase and 20S proteasomal proteins of the haloarchaeon Haloferax volcanii.</title>
        <authorList>
            <person name="Reuter C.J."/>
            <person name="Kaczowka S.J."/>
            <person name="Maupin-Furlow J.A."/>
        </authorList>
    </citation>
    <scope>INDUCTION</scope>
</reference>
<reference key="5">
    <citation type="journal article" date="2006" name="J. Bacteriol.">
        <title>Posttranslational modification of the 20S proteasomal proteins of the archaeon Haloferax volcanii.</title>
        <authorList>
            <person name="Humbard M.A."/>
            <person name="Stevens S.M. Jr."/>
            <person name="Maupin-Furlow J.A."/>
        </authorList>
    </citation>
    <scope>ACETYLATION AT MET-1</scope>
</reference>
<reference key="6">
    <citation type="journal article" date="2008" name="J. Bacteriol.">
        <title>Proteasomal components required for cell growth and stress responses in the haloarchaeon Haloferax volcanii.</title>
        <authorList>
            <person name="Zhou G."/>
            <person name="Kowalczyk D."/>
            <person name="Humbard M.A."/>
            <person name="Rohatgi S."/>
            <person name="Maupin-Furlow J.A."/>
        </authorList>
    </citation>
    <scope>DISRUPTION PHENOTYPE</scope>
</reference>
<proteinExistence type="evidence at protein level"/>
<organism>
    <name type="scientific">Haloferax volcanii (strain ATCC 29605 / DSM 3757 / JCM 8879 / NBRC 14742 / NCIMB 2012 / VKM B-1768 / DS2)</name>
    <name type="common">Halobacterium volcanii</name>
    <dbReference type="NCBI Taxonomy" id="309800"/>
    <lineage>
        <taxon>Archaea</taxon>
        <taxon>Methanobacteriati</taxon>
        <taxon>Methanobacteriota</taxon>
        <taxon>Stenosarchaea group</taxon>
        <taxon>Halobacteria</taxon>
        <taxon>Halobacteriales</taxon>
        <taxon>Haloferacaceae</taxon>
        <taxon>Haloferax</taxon>
    </lineage>
</organism>